<comment type="function">
    <text evidence="1">Endonuclease IV plays a role in DNA repair. It cleaves phosphodiester bonds at apurinic or apyrimidinic (AP) sites, generating a 3'-hydroxyl group and a 5'-terminal sugar phosphate.</text>
</comment>
<comment type="catalytic activity">
    <reaction evidence="1">
        <text>Endonucleolytic cleavage to 5'-phosphooligonucleotide end-products.</text>
        <dbReference type="EC" id="3.1.21.2"/>
    </reaction>
</comment>
<comment type="cofactor">
    <cofactor evidence="1">
        <name>Zn(2+)</name>
        <dbReference type="ChEBI" id="CHEBI:29105"/>
    </cofactor>
    <text evidence="1">Binds 3 Zn(2+) ions.</text>
</comment>
<comment type="similarity">
    <text evidence="1">Belongs to the AP endonuclease 2 family.</text>
</comment>
<evidence type="ECO:0000255" key="1">
    <source>
        <dbReference type="HAMAP-Rule" id="MF_00152"/>
    </source>
</evidence>
<gene>
    <name evidence="1" type="primary">nfo</name>
    <name type="ordered locus">BDI_1200</name>
</gene>
<accession>A6LB99</accession>
<protein>
    <recommendedName>
        <fullName evidence="1">Probable endonuclease 4</fullName>
        <ecNumber evidence="1">3.1.21.2</ecNumber>
    </recommendedName>
    <alternativeName>
        <fullName evidence="1">Endodeoxyribonuclease IV</fullName>
    </alternativeName>
    <alternativeName>
        <fullName evidence="1">Endonuclease IV</fullName>
    </alternativeName>
</protein>
<keyword id="KW-0227">DNA damage</keyword>
<keyword id="KW-0234">DNA repair</keyword>
<keyword id="KW-0255">Endonuclease</keyword>
<keyword id="KW-0378">Hydrolase</keyword>
<keyword id="KW-0479">Metal-binding</keyword>
<keyword id="KW-0540">Nuclease</keyword>
<keyword id="KW-1185">Reference proteome</keyword>
<keyword id="KW-0862">Zinc</keyword>
<organism>
    <name type="scientific">Parabacteroides distasonis (strain ATCC 8503 / DSM 20701 / CIP 104284 / JCM 5825 / NCTC 11152)</name>
    <dbReference type="NCBI Taxonomy" id="435591"/>
    <lineage>
        <taxon>Bacteria</taxon>
        <taxon>Pseudomonadati</taxon>
        <taxon>Bacteroidota</taxon>
        <taxon>Bacteroidia</taxon>
        <taxon>Bacteroidales</taxon>
        <taxon>Tannerellaceae</taxon>
        <taxon>Parabacteroides</taxon>
    </lineage>
</organism>
<sequence>MKYVGAHVSAVGGVENAPVNAHEIGAKAFALFTRNQRQWKSQPLKADSIHLFKERCEAYGYDPGCILPHDSYLINLGNPDAEGLQKSRDAFLDEMTRCEQLGLKMLNFHPGSHLGKMEVDTCLSRIAESINITLAQTSGVCAVIENTAGQGSNLGYTFEQIAYIINEVEDKSRVGVCLDTAHTLAAGYDIKTPEGFAETFRHFDEVVGFSYLRGMHLNDSKKELGSRVDRHESIGKGLMGLDTFRMIMVDPRFDNMPLILETPDEALWPEEIQLLYKQLKS</sequence>
<name>END4_PARD8</name>
<dbReference type="EC" id="3.1.21.2" evidence="1"/>
<dbReference type="EMBL" id="CP000140">
    <property type="protein sequence ID" value="ABR42963.1"/>
    <property type="molecule type" value="Genomic_DNA"/>
</dbReference>
<dbReference type="RefSeq" id="WP_011966354.1">
    <property type="nucleotide sequence ID" value="NZ_LR215978.1"/>
</dbReference>
<dbReference type="SMR" id="A6LB99"/>
<dbReference type="STRING" id="435591.BDI_1200"/>
<dbReference type="PaxDb" id="435591-BDI_1200"/>
<dbReference type="KEGG" id="pdi:BDI_1200"/>
<dbReference type="eggNOG" id="COG0648">
    <property type="taxonomic scope" value="Bacteria"/>
</dbReference>
<dbReference type="HOGENOM" id="CLU_025885_0_4_10"/>
<dbReference type="BioCyc" id="PDIS435591:G1G5A-1235-MONOMER"/>
<dbReference type="Proteomes" id="UP000000566">
    <property type="component" value="Chromosome"/>
</dbReference>
<dbReference type="GO" id="GO:0008833">
    <property type="term" value="F:deoxyribonuclease IV (phage-T4-induced) activity"/>
    <property type="evidence" value="ECO:0007669"/>
    <property type="project" value="UniProtKB-UniRule"/>
</dbReference>
<dbReference type="GO" id="GO:0003677">
    <property type="term" value="F:DNA binding"/>
    <property type="evidence" value="ECO:0007669"/>
    <property type="project" value="InterPro"/>
</dbReference>
<dbReference type="GO" id="GO:0003906">
    <property type="term" value="F:DNA-(apurinic or apyrimidinic site) endonuclease activity"/>
    <property type="evidence" value="ECO:0007669"/>
    <property type="project" value="TreeGrafter"/>
</dbReference>
<dbReference type="GO" id="GO:0008081">
    <property type="term" value="F:phosphoric diester hydrolase activity"/>
    <property type="evidence" value="ECO:0007669"/>
    <property type="project" value="TreeGrafter"/>
</dbReference>
<dbReference type="GO" id="GO:0008270">
    <property type="term" value="F:zinc ion binding"/>
    <property type="evidence" value="ECO:0007669"/>
    <property type="project" value="UniProtKB-UniRule"/>
</dbReference>
<dbReference type="GO" id="GO:0006284">
    <property type="term" value="P:base-excision repair"/>
    <property type="evidence" value="ECO:0007669"/>
    <property type="project" value="TreeGrafter"/>
</dbReference>
<dbReference type="CDD" id="cd00019">
    <property type="entry name" value="AP2Ec"/>
    <property type="match status" value="1"/>
</dbReference>
<dbReference type="FunFam" id="3.20.20.150:FF:000001">
    <property type="entry name" value="Probable endonuclease 4"/>
    <property type="match status" value="1"/>
</dbReference>
<dbReference type="Gene3D" id="3.20.20.150">
    <property type="entry name" value="Divalent-metal-dependent TIM barrel enzymes"/>
    <property type="match status" value="1"/>
</dbReference>
<dbReference type="HAMAP" id="MF_00152">
    <property type="entry name" value="Nfo"/>
    <property type="match status" value="1"/>
</dbReference>
<dbReference type="InterPro" id="IPR001719">
    <property type="entry name" value="AP_endonuc_2"/>
</dbReference>
<dbReference type="InterPro" id="IPR018246">
    <property type="entry name" value="AP_endonuc_F2_Zn_BS"/>
</dbReference>
<dbReference type="InterPro" id="IPR036237">
    <property type="entry name" value="Xyl_isomerase-like_sf"/>
</dbReference>
<dbReference type="InterPro" id="IPR013022">
    <property type="entry name" value="Xyl_isomerase-like_TIM-brl"/>
</dbReference>
<dbReference type="NCBIfam" id="TIGR00587">
    <property type="entry name" value="nfo"/>
    <property type="match status" value="1"/>
</dbReference>
<dbReference type="NCBIfam" id="NF002199">
    <property type="entry name" value="PRK01060.1-4"/>
    <property type="match status" value="1"/>
</dbReference>
<dbReference type="PANTHER" id="PTHR21445:SF0">
    <property type="entry name" value="APURINIC-APYRIMIDINIC ENDONUCLEASE"/>
    <property type="match status" value="1"/>
</dbReference>
<dbReference type="PANTHER" id="PTHR21445">
    <property type="entry name" value="ENDONUCLEASE IV ENDODEOXYRIBONUCLEASE IV"/>
    <property type="match status" value="1"/>
</dbReference>
<dbReference type="Pfam" id="PF01261">
    <property type="entry name" value="AP_endonuc_2"/>
    <property type="match status" value="1"/>
</dbReference>
<dbReference type="SMART" id="SM00518">
    <property type="entry name" value="AP2Ec"/>
    <property type="match status" value="1"/>
</dbReference>
<dbReference type="SUPFAM" id="SSF51658">
    <property type="entry name" value="Xylose isomerase-like"/>
    <property type="match status" value="1"/>
</dbReference>
<dbReference type="PROSITE" id="PS00729">
    <property type="entry name" value="AP_NUCLEASE_F2_1"/>
    <property type="match status" value="1"/>
</dbReference>
<dbReference type="PROSITE" id="PS00731">
    <property type="entry name" value="AP_NUCLEASE_F2_3"/>
    <property type="match status" value="1"/>
</dbReference>
<dbReference type="PROSITE" id="PS51432">
    <property type="entry name" value="AP_NUCLEASE_F2_4"/>
    <property type="match status" value="1"/>
</dbReference>
<feature type="chain" id="PRO_1000011327" description="Probable endonuclease 4">
    <location>
        <begin position="1"/>
        <end position="281"/>
    </location>
</feature>
<feature type="binding site" evidence="1">
    <location>
        <position position="69"/>
    </location>
    <ligand>
        <name>Zn(2+)</name>
        <dbReference type="ChEBI" id="CHEBI:29105"/>
        <label>1</label>
    </ligand>
</feature>
<feature type="binding site" evidence="1">
    <location>
        <position position="109"/>
    </location>
    <ligand>
        <name>Zn(2+)</name>
        <dbReference type="ChEBI" id="CHEBI:29105"/>
        <label>1</label>
    </ligand>
</feature>
<feature type="binding site" evidence="1">
    <location>
        <position position="145"/>
    </location>
    <ligand>
        <name>Zn(2+)</name>
        <dbReference type="ChEBI" id="CHEBI:29105"/>
        <label>1</label>
    </ligand>
</feature>
<feature type="binding site" evidence="1">
    <location>
        <position position="145"/>
    </location>
    <ligand>
        <name>Zn(2+)</name>
        <dbReference type="ChEBI" id="CHEBI:29105"/>
        <label>2</label>
    </ligand>
</feature>
<feature type="binding site" evidence="1">
    <location>
        <position position="179"/>
    </location>
    <ligand>
        <name>Zn(2+)</name>
        <dbReference type="ChEBI" id="CHEBI:29105"/>
        <label>2</label>
    </ligand>
</feature>
<feature type="binding site" evidence="1">
    <location>
        <position position="182"/>
    </location>
    <ligand>
        <name>Zn(2+)</name>
        <dbReference type="ChEBI" id="CHEBI:29105"/>
        <label>3</label>
    </ligand>
</feature>
<feature type="binding site" evidence="1">
    <location>
        <position position="216"/>
    </location>
    <ligand>
        <name>Zn(2+)</name>
        <dbReference type="ChEBI" id="CHEBI:29105"/>
        <label>2</label>
    </ligand>
</feature>
<feature type="binding site" evidence="1">
    <location>
        <position position="229"/>
    </location>
    <ligand>
        <name>Zn(2+)</name>
        <dbReference type="ChEBI" id="CHEBI:29105"/>
        <label>3</label>
    </ligand>
</feature>
<feature type="binding site" evidence="1">
    <location>
        <position position="231"/>
    </location>
    <ligand>
        <name>Zn(2+)</name>
        <dbReference type="ChEBI" id="CHEBI:29105"/>
        <label>3</label>
    </ligand>
</feature>
<feature type="binding site" evidence="1">
    <location>
        <position position="261"/>
    </location>
    <ligand>
        <name>Zn(2+)</name>
        <dbReference type="ChEBI" id="CHEBI:29105"/>
        <label>2</label>
    </ligand>
</feature>
<proteinExistence type="inferred from homology"/>
<reference key="1">
    <citation type="journal article" date="2007" name="PLoS Biol.">
        <title>Evolution of symbiotic bacteria in the distal human intestine.</title>
        <authorList>
            <person name="Xu J."/>
            <person name="Mahowald M.A."/>
            <person name="Ley R.E."/>
            <person name="Lozupone C.A."/>
            <person name="Hamady M."/>
            <person name="Martens E.C."/>
            <person name="Henrissat B."/>
            <person name="Coutinho P.M."/>
            <person name="Minx P."/>
            <person name="Latreille P."/>
            <person name="Cordum H."/>
            <person name="Van Brunt A."/>
            <person name="Kim K."/>
            <person name="Fulton R.S."/>
            <person name="Fulton L.A."/>
            <person name="Clifton S.W."/>
            <person name="Wilson R.K."/>
            <person name="Knight R.D."/>
            <person name="Gordon J.I."/>
        </authorList>
    </citation>
    <scope>NUCLEOTIDE SEQUENCE [LARGE SCALE GENOMIC DNA]</scope>
    <source>
        <strain>ATCC 8503 / DSM 20701 / CIP 104284 / JCM 5825 / NCTC 11152</strain>
    </source>
</reference>